<name>TILS_SHEON</name>
<feature type="chain" id="PRO_0000181762" description="tRNA(Ile)-lysidine synthase">
    <location>
        <begin position="1"/>
        <end position="464"/>
    </location>
</feature>
<feature type="binding site" evidence="1">
    <location>
        <begin position="30"/>
        <end position="35"/>
    </location>
    <ligand>
        <name>ATP</name>
        <dbReference type="ChEBI" id="CHEBI:30616"/>
    </ligand>
</feature>
<dbReference type="EC" id="6.3.4.19" evidence="1"/>
<dbReference type="EMBL" id="AE014299">
    <property type="protein sequence ID" value="AAN54700.1"/>
    <property type="molecule type" value="Genomic_DNA"/>
</dbReference>
<dbReference type="RefSeq" id="NP_717256.1">
    <property type="nucleotide sequence ID" value="NC_004347.2"/>
</dbReference>
<dbReference type="RefSeq" id="WP_011071800.1">
    <property type="nucleotide sequence ID" value="NC_004347.2"/>
</dbReference>
<dbReference type="SMR" id="Q8EGF9"/>
<dbReference type="STRING" id="211586.SO_1645"/>
<dbReference type="PaxDb" id="211586-SO_1645"/>
<dbReference type="KEGG" id="son:SO_1645"/>
<dbReference type="PATRIC" id="fig|211586.12.peg.1584"/>
<dbReference type="eggNOG" id="COG0037">
    <property type="taxonomic scope" value="Bacteria"/>
</dbReference>
<dbReference type="HOGENOM" id="CLU_018869_2_0_6"/>
<dbReference type="OrthoDB" id="9807403at2"/>
<dbReference type="PhylomeDB" id="Q8EGF9"/>
<dbReference type="BioCyc" id="SONE211586:G1GMP-1515-MONOMER"/>
<dbReference type="Proteomes" id="UP000008186">
    <property type="component" value="Chromosome"/>
</dbReference>
<dbReference type="GO" id="GO:0005737">
    <property type="term" value="C:cytoplasm"/>
    <property type="evidence" value="ECO:0007669"/>
    <property type="project" value="UniProtKB-SubCell"/>
</dbReference>
<dbReference type="GO" id="GO:0005524">
    <property type="term" value="F:ATP binding"/>
    <property type="evidence" value="ECO:0007669"/>
    <property type="project" value="UniProtKB-UniRule"/>
</dbReference>
<dbReference type="GO" id="GO:0032267">
    <property type="term" value="F:tRNA(Ile)-lysidine synthase activity"/>
    <property type="evidence" value="ECO:0007669"/>
    <property type="project" value="UniProtKB-EC"/>
</dbReference>
<dbReference type="GO" id="GO:0006400">
    <property type="term" value="P:tRNA modification"/>
    <property type="evidence" value="ECO:0007669"/>
    <property type="project" value="UniProtKB-UniRule"/>
</dbReference>
<dbReference type="CDD" id="cd01992">
    <property type="entry name" value="TilS_N"/>
    <property type="match status" value="1"/>
</dbReference>
<dbReference type="Gene3D" id="1.20.59.20">
    <property type="match status" value="1"/>
</dbReference>
<dbReference type="Gene3D" id="3.40.50.620">
    <property type="entry name" value="HUPs"/>
    <property type="match status" value="1"/>
</dbReference>
<dbReference type="HAMAP" id="MF_01161">
    <property type="entry name" value="tRNA_Ile_lys_synt"/>
    <property type="match status" value="1"/>
</dbReference>
<dbReference type="InterPro" id="IPR012796">
    <property type="entry name" value="Lysidine-tRNA-synth_C"/>
</dbReference>
<dbReference type="InterPro" id="IPR014729">
    <property type="entry name" value="Rossmann-like_a/b/a_fold"/>
</dbReference>
<dbReference type="InterPro" id="IPR011063">
    <property type="entry name" value="TilS/TtcA_N"/>
</dbReference>
<dbReference type="InterPro" id="IPR012094">
    <property type="entry name" value="tRNA_Ile_lys_synt"/>
</dbReference>
<dbReference type="InterPro" id="IPR012795">
    <property type="entry name" value="tRNA_Ile_lys_synt_N"/>
</dbReference>
<dbReference type="InterPro" id="IPR015262">
    <property type="entry name" value="tRNA_Ile_lys_synt_subst-bd"/>
</dbReference>
<dbReference type="NCBIfam" id="TIGR02433">
    <property type="entry name" value="lysidine_TilS_C"/>
    <property type="match status" value="1"/>
</dbReference>
<dbReference type="NCBIfam" id="TIGR02432">
    <property type="entry name" value="lysidine_TilS_N"/>
    <property type="match status" value="1"/>
</dbReference>
<dbReference type="PANTHER" id="PTHR43033">
    <property type="entry name" value="TRNA(ILE)-LYSIDINE SYNTHASE-RELATED"/>
    <property type="match status" value="1"/>
</dbReference>
<dbReference type="PANTHER" id="PTHR43033:SF1">
    <property type="entry name" value="TRNA(ILE)-LYSIDINE SYNTHASE-RELATED"/>
    <property type="match status" value="1"/>
</dbReference>
<dbReference type="Pfam" id="PF01171">
    <property type="entry name" value="ATP_bind_3"/>
    <property type="match status" value="1"/>
</dbReference>
<dbReference type="Pfam" id="PF09179">
    <property type="entry name" value="TilS"/>
    <property type="match status" value="1"/>
</dbReference>
<dbReference type="Pfam" id="PF11734">
    <property type="entry name" value="TilS_C"/>
    <property type="match status" value="1"/>
</dbReference>
<dbReference type="SMART" id="SM00977">
    <property type="entry name" value="TilS_C"/>
    <property type="match status" value="1"/>
</dbReference>
<dbReference type="SUPFAM" id="SSF52402">
    <property type="entry name" value="Adenine nucleotide alpha hydrolases-like"/>
    <property type="match status" value="1"/>
</dbReference>
<dbReference type="SUPFAM" id="SSF82829">
    <property type="entry name" value="MesJ substrate recognition domain-like"/>
    <property type="match status" value="1"/>
</dbReference>
<dbReference type="SUPFAM" id="SSF56037">
    <property type="entry name" value="PheT/TilS domain"/>
    <property type="match status" value="1"/>
</dbReference>
<comment type="function">
    <text evidence="1">Ligates lysine onto the cytidine present at position 34 of the AUA codon-specific tRNA(Ile) that contains the anticodon CAU, in an ATP-dependent manner. Cytidine is converted to lysidine, thus changing the amino acid specificity of the tRNA from methionine to isoleucine.</text>
</comment>
<comment type="catalytic activity">
    <reaction evidence="1">
        <text>cytidine(34) in tRNA(Ile2) + L-lysine + ATP = lysidine(34) in tRNA(Ile2) + AMP + diphosphate + H(+)</text>
        <dbReference type="Rhea" id="RHEA:43744"/>
        <dbReference type="Rhea" id="RHEA-COMP:10625"/>
        <dbReference type="Rhea" id="RHEA-COMP:10670"/>
        <dbReference type="ChEBI" id="CHEBI:15378"/>
        <dbReference type="ChEBI" id="CHEBI:30616"/>
        <dbReference type="ChEBI" id="CHEBI:32551"/>
        <dbReference type="ChEBI" id="CHEBI:33019"/>
        <dbReference type="ChEBI" id="CHEBI:82748"/>
        <dbReference type="ChEBI" id="CHEBI:83665"/>
        <dbReference type="ChEBI" id="CHEBI:456215"/>
        <dbReference type="EC" id="6.3.4.19"/>
    </reaction>
</comment>
<comment type="subcellular location">
    <subcellularLocation>
        <location evidence="1">Cytoplasm</location>
    </subcellularLocation>
</comment>
<comment type="domain">
    <text>The N-terminal region contains the highly conserved SGGXDS motif, predicted to be a P-loop motif involved in ATP binding.</text>
</comment>
<comment type="similarity">
    <text evidence="1">Belongs to the tRNA(Ile)-lysidine synthase family.</text>
</comment>
<organism>
    <name type="scientific">Shewanella oneidensis (strain ATCC 700550 / JCM 31522 / CIP 106686 / LMG 19005 / NCIMB 14063 / MR-1)</name>
    <dbReference type="NCBI Taxonomy" id="211586"/>
    <lineage>
        <taxon>Bacteria</taxon>
        <taxon>Pseudomonadati</taxon>
        <taxon>Pseudomonadota</taxon>
        <taxon>Gammaproteobacteria</taxon>
        <taxon>Alteromonadales</taxon>
        <taxon>Shewanellaceae</taxon>
        <taxon>Shewanella</taxon>
    </lineage>
</organism>
<gene>
    <name evidence="1" type="primary">tilS</name>
    <name type="ordered locus">SO_1645</name>
</gene>
<accession>Q8EGF9</accession>
<proteinExistence type="inferred from homology"/>
<protein>
    <recommendedName>
        <fullName evidence="1">tRNA(Ile)-lysidine synthase</fullName>
        <ecNumber evidence="1">6.3.4.19</ecNumber>
    </recommendedName>
    <alternativeName>
        <fullName evidence="1">tRNA(Ile)-2-lysyl-cytidine synthase</fullName>
    </alternativeName>
    <alternativeName>
        <fullName evidence="1">tRNA(Ile)-lysidine synthetase</fullName>
    </alternativeName>
</protein>
<evidence type="ECO:0000255" key="1">
    <source>
        <dbReference type="HAMAP-Rule" id="MF_01161"/>
    </source>
</evidence>
<sequence>MTAQDLSVHIARWLDSLPLQAGSKLVLAYSGGVDSEVLAYGLSEYAKQRPDLRYQLIYVHHGLSPNADNWAKHCQARAAIYGLPVTVERVQLILGPRVSVEAEARKARYQAILPHLNPQDILLTAHHEDDQLETILLALKRGQGPKGLAAMGQIQPLSLADKGSCLQVRPLLDISREMIETFAQTRQLVHIEDESNQDDKYDRNFLRLEIIPRLKARWPSIATTASRSAQLCAEQQAIVETEVSERLPKLLVKAPVTEQTVLKLSELAAQPIEWQGILLRGFIESQEFSLPSYVQLQQMLQQLIHAKEDAKVHIRINDCVLRRFAGMLYLDSGETLSTALHITARDLHQEILTLLTQASAMVEDKIVPFALVTTGPRLRLPKADEVVSLGYGLPGQFRCQPHFRDKGRELKKLWQECAVPPWLRAEVGFLFYNDKLVMAFGLWVEKAFCAQGDEIGLSYLIANP</sequence>
<keyword id="KW-0067">ATP-binding</keyword>
<keyword id="KW-0963">Cytoplasm</keyword>
<keyword id="KW-0436">Ligase</keyword>
<keyword id="KW-0547">Nucleotide-binding</keyword>
<keyword id="KW-1185">Reference proteome</keyword>
<keyword id="KW-0819">tRNA processing</keyword>
<reference key="1">
    <citation type="journal article" date="2002" name="Nat. Biotechnol.">
        <title>Genome sequence of the dissimilatory metal ion-reducing bacterium Shewanella oneidensis.</title>
        <authorList>
            <person name="Heidelberg J.F."/>
            <person name="Paulsen I.T."/>
            <person name="Nelson K.E."/>
            <person name="Gaidos E.J."/>
            <person name="Nelson W.C."/>
            <person name="Read T.D."/>
            <person name="Eisen J.A."/>
            <person name="Seshadri R."/>
            <person name="Ward N.L."/>
            <person name="Methe B.A."/>
            <person name="Clayton R.A."/>
            <person name="Meyer T."/>
            <person name="Tsapin A."/>
            <person name="Scott J."/>
            <person name="Beanan M.J."/>
            <person name="Brinkac L.M."/>
            <person name="Daugherty S.C."/>
            <person name="DeBoy R.T."/>
            <person name="Dodson R.J."/>
            <person name="Durkin A.S."/>
            <person name="Haft D.H."/>
            <person name="Kolonay J.F."/>
            <person name="Madupu R."/>
            <person name="Peterson J.D."/>
            <person name="Umayam L.A."/>
            <person name="White O."/>
            <person name="Wolf A.M."/>
            <person name="Vamathevan J.J."/>
            <person name="Weidman J.F."/>
            <person name="Impraim M."/>
            <person name="Lee K."/>
            <person name="Berry K.J."/>
            <person name="Lee C."/>
            <person name="Mueller J."/>
            <person name="Khouri H.M."/>
            <person name="Gill J."/>
            <person name="Utterback T.R."/>
            <person name="McDonald L.A."/>
            <person name="Feldblyum T.V."/>
            <person name="Smith H.O."/>
            <person name="Venter J.C."/>
            <person name="Nealson K.H."/>
            <person name="Fraser C.M."/>
        </authorList>
    </citation>
    <scope>NUCLEOTIDE SEQUENCE [LARGE SCALE GENOMIC DNA]</scope>
    <source>
        <strain>ATCC 700550 / JCM 31522 / CIP 106686 / LMG 19005 / NCIMB 14063 / MR-1</strain>
    </source>
</reference>